<comment type="function">
    <text evidence="2 4 5 7 8 9">Phosphorylates the deoxyribonucleosides deoxycytidine, deoxyguanosine and deoxyadenosine (PubMed:12808445, PubMed:18377927, PubMed:19159229, PubMed:1996353, PubMed:20614893, PubMed:20637175). Has broad substrate specificity, and does not display selectivity based on the chirality of the substrate. It is also an essential enzyme for the phosphorylation of numerous nucleoside analogs widely employed as antiviral and chemotherapeutic agents (PubMed:12808445).</text>
</comment>
<comment type="catalytic activity">
    <reaction evidence="2 4 5 7 8 9">
        <text>2'-deoxycytidine + a ribonucleoside 5'-triphosphate = dCMP + a ribonucleoside 5'-diphosphate + H(+)</text>
        <dbReference type="Rhea" id="RHEA:20061"/>
        <dbReference type="ChEBI" id="CHEBI:15378"/>
        <dbReference type="ChEBI" id="CHEBI:15698"/>
        <dbReference type="ChEBI" id="CHEBI:57566"/>
        <dbReference type="ChEBI" id="CHEBI:57930"/>
        <dbReference type="ChEBI" id="CHEBI:61557"/>
        <dbReference type="EC" id="2.7.1.74"/>
    </reaction>
</comment>
<comment type="catalytic activity">
    <reaction evidence="4 5 7">
        <text>2'-deoxyadenosine + ATP = dAMP + ADP + H(+)</text>
        <dbReference type="Rhea" id="RHEA:23452"/>
        <dbReference type="ChEBI" id="CHEBI:15378"/>
        <dbReference type="ChEBI" id="CHEBI:17256"/>
        <dbReference type="ChEBI" id="CHEBI:30616"/>
        <dbReference type="ChEBI" id="CHEBI:58245"/>
        <dbReference type="ChEBI" id="CHEBI:456216"/>
        <dbReference type="EC" id="2.7.1.76"/>
    </reaction>
</comment>
<comment type="catalytic activity">
    <reaction evidence="5 7">
        <text>2'-deoxyguanosine + ATP = dGMP + ADP + H(+)</text>
        <dbReference type="Rhea" id="RHEA:19201"/>
        <dbReference type="ChEBI" id="CHEBI:15378"/>
        <dbReference type="ChEBI" id="CHEBI:17172"/>
        <dbReference type="ChEBI" id="CHEBI:30616"/>
        <dbReference type="ChEBI" id="CHEBI:57673"/>
        <dbReference type="ChEBI" id="CHEBI:456216"/>
        <dbReference type="EC" id="2.7.1.113"/>
    </reaction>
</comment>
<comment type="biophysicochemical properties">
    <kinetics>
        <KM evidence="2">6.2 uM for deoxycytidine (dC)</KM>
        <KM evidence="2">15.5 uM for cytarabine (araC)</KM>
        <KM evidence="2">22 uM for gemcitabine</KM>
        <KM evidence="9">59 nM for deoxycytidine (dC)</KM>
    </kinetics>
</comment>
<comment type="subunit">
    <text evidence="2 3 6 8 10">Homodimer.</text>
</comment>
<comment type="interaction">
    <interactant intactId="EBI-715861">
        <id>P27707</id>
    </interactant>
    <interactant intactId="EBI-3908194">
        <id>Q16854</id>
        <label>DGUOK</label>
    </interactant>
    <organismsDiffer>false</organismsDiffer>
    <experiments>4</experiments>
</comment>
<comment type="subcellular location">
    <subcellularLocation>
        <location evidence="11">Nucleus</location>
    </subcellularLocation>
</comment>
<comment type="PTM">
    <text evidence="9">Phosphorylated and activated in vitro upon phosphorylation at Ser-74 by CSNK1D/CK1.</text>
</comment>
<comment type="similarity">
    <text evidence="12">Belongs to the DCK/DGK family.</text>
</comment>
<comment type="caution">
    <text evidence="13">Was shown to be phosphorylated and activated by CSNK1D/CK1 in vitro but probably not in vivo.</text>
</comment>
<sequence>MATPPKRSCPSFSASSEGTRIKKISIEGNIAAGKSTFVNILKQLCEDWEVVPEPVARWCNVQSTQDEFEELTMSQKNGGNVLQMMYEKPERWSFTFQTYACLSRIRAQLASLNGKLKDAEKPVLFFERSVYSDRYIFASNLYESECMNETEWTIYQDWHDWMNNQFGQSLELDGIIYLQATPETCLHRIYLRGRNEEQGIPLEYLEKLHYKHESWLLHRTLKTNFDYLQEVPILTLDVNEDFKDKYESLVEKVKEFLSTL</sequence>
<keyword id="KW-0002">3D-structure</keyword>
<keyword id="KW-0067">ATP-binding</keyword>
<keyword id="KW-0903">Direct protein sequencing</keyword>
<keyword id="KW-0418">Kinase</keyword>
<keyword id="KW-0547">Nucleotide-binding</keyword>
<keyword id="KW-0539">Nucleus</keyword>
<keyword id="KW-0597">Phosphoprotein</keyword>
<keyword id="KW-1267">Proteomics identification</keyword>
<keyword id="KW-1185">Reference proteome</keyword>
<keyword id="KW-0808">Transferase</keyword>
<feature type="chain" id="PRO_0000175090" description="Deoxycytidine kinase">
    <location>
        <begin position="1"/>
        <end position="260"/>
    </location>
</feature>
<feature type="active site" description="Proton acceptor" evidence="1">
    <location>
        <position position="127"/>
    </location>
</feature>
<feature type="binding site">
    <location>
        <begin position="28"/>
        <end position="36"/>
    </location>
    <ligand>
        <name>ATP</name>
        <dbReference type="ChEBI" id="CHEBI:30616"/>
    </ligand>
</feature>
<feature type="binding site">
    <location>
        <position position="53"/>
    </location>
    <ligand>
        <name>substrate</name>
    </ligand>
</feature>
<feature type="binding site">
    <location>
        <position position="86"/>
    </location>
    <ligand>
        <name>substrate</name>
    </ligand>
</feature>
<feature type="binding site">
    <location>
        <position position="97"/>
    </location>
    <ligand>
        <name>substrate</name>
    </ligand>
</feature>
<feature type="binding site">
    <location>
        <position position="128"/>
    </location>
    <ligand>
        <name>substrate</name>
    </ligand>
</feature>
<feature type="binding site">
    <location>
        <position position="133"/>
    </location>
    <ligand>
        <name>substrate</name>
    </ligand>
</feature>
<feature type="binding site">
    <location>
        <begin position="188"/>
        <end position="192"/>
    </location>
    <ligand>
        <name>ATP</name>
        <dbReference type="ChEBI" id="CHEBI:30616"/>
    </ligand>
</feature>
<feature type="binding site">
    <location>
        <position position="197"/>
    </location>
    <ligand>
        <name>substrate</name>
    </ligand>
</feature>
<feature type="binding site">
    <location>
        <begin position="240"/>
        <end position="242"/>
    </location>
    <ligand>
        <name>ATP</name>
        <dbReference type="ChEBI" id="CHEBI:30616"/>
    </ligand>
</feature>
<feature type="modified residue" description="Phosphoserine; by CK1" evidence="13">
    <location>
        <position position="11"/>
    </location>
</feature>
<feature type="modified residue" description="Phosphoserine; by CK1" evidence="13">
    <location>
        <position position="15"/>
    </location>
</feature>
<feature type="modified residue" description="Phosphothreonine; by CK1" evidence="13">
    <location>
        <position position="72"/>
    </location>
</feature>
<feature type="modified residue" description="Phosphoserine" evidence="9 14 15 16">
    <location>
        <position position="74"/>
    </location>
</feature>
<feature type="mutagenesis site" description="4.5-fold increase in Km." evidence="9">
    <original>S</original>
    <variation>A</variation>
    <location>
        <position position="74"/>
    </location>
</feature>
<feature type="mutagenesis site" description="Strongly increased catalytic efficiency towards deoxycytidine; when associated with M-104 and A-133." evidence="2">
    <original>A</original>
    <variation>V</variation>
    <location>
        <position position="100"/>
    </location>
</feature>
<feature type="mutagenesis site" description="Strongly increased catalytic efficiency towards deoxythymidine; when associated with A-133." evidence="2 5 8">
    <original>R</original>
    <variation>L</variation>
    <location>
        <position position="104"/>
    </location>
</feature>
<feature type="mutagenesis site" description="Strongly increased catalytic efficiency towards deoxycytidine; when associated with V-100 and A-133." evidence="2 5 8">
    <original>R</original>
    <variation>M</variation>
    <location>
        <position position="104"/>
    </location>
</feature>
<feature type="mutagenesis site" description="Strongly increased catalytic efficiency towards deoxycytidine; when associated with V-100 and M-104. Strongly increased catalytic efficiency towards deoxythymidine; when associated with L-104." evidence="2 5 8">
    <original>D</original>
    <variation>A</variation>
    <location>
        <position position="133"/>
    </location>
</feature>
<feature type="sequence conflict" description="In Ref. 4; AAV38744/AAV38745." evidence="12" ref="4">
    <original>P</original>
    <variation>S</variation>
    <location>
        <position position="122"/>
    </location>
</feature>
<feature type="strand" evidence="17">
    <location>
        <begin position="22"/>
        <end position="27"/>
    </location>
</feature>
<feature type="helix" evidence="17">
    <location>
        <begin position="34"/>
        <end position="38"/>
    </location>
</feature>
<feature type="turn" evidence="17">
    <location>
        <begin position="39"/>
        <end position="41"/>
    </location>
</feature>
<feature type="helix" evidence="17">
    <location>
        <begin position="42"/>
        <end position="44"/>
    </location>
</feature>
<feature type="strand" evidence="17">
    <location>
        <begin position="48"/>
        <end position="51"/>
    </location>
</feature>
<feature type="helix" evidence="17">
    <location>
        <begin position="55"/>
        <end position="58"/>
    </location>
</feature>
<feature type="strand" evidence="18">
    <location>
        <begin position="61"/>
        <end position="63"/>
    </location>
</feature>
<feature type="helix" evidence="19">
    <location>
        <begin position="69"/>
        <end position="72"/>
    </location>
</feature>
<feature type="helix" evidence="20">
    <location>
        <begin position="73"/>
        <end position="77"/>
    </location>
</feature>
<feature type="helix" evidence="17">
    <location>
        <begin position="81"/>
        <end position="87"/>
    </location>
</feature>
<feature type="helix" evidence="17">
    <location>
        <begin position="89"/>
        <end position="112"/>
    </location>
</feature>
<feature type="helix" evidence="17">
    <location>
        <begin position="115"/>
        <end position="118"/>
    </location>
</feature>
<feature type="strand" evidence="17">
    <location>
        <begin position="119"/>
        <end position="121"/>
    </location>
</feature>
<feature type="strand" evidence="17">
    <location>
        <begin position="123"/>
        <end position="128"/>
    </location>
</feature>
<feature type="helix" evidence="17">
    <location>
        <begin position="130"/>
        <end position="135"/>
    </location>
</feature>
<feature type="helix" evidence="17">
    <location>
        <begin position="137"/>
        <end position="143"/>
    </location>
</feature>
<feature type="helix" evidence="17">
    <location>
        <begin position="149"/>
        <end position="170"/>
    </location>
</feature>
<feature type="strand" evidence="17">
    <location>
        <begin position="173"/>
        <end position="179"/>
    </location>
</feature>
<feature type="helix" evidence="17">
    <location>
        <begin position="182"/>
        <end position="192"/>
    </location>
</feature>
<feature type="helix" evidence="17">
    <location>
        <begin position="195"/>
        <end position="197"/>
    </location>
</feature>
<feature type="helix" evidence="17">
    <location>
        <begin position="202"/>
        <end position="216"/>
    </location>
</feature>
<feature type="helix" evidence="17">
    <location>
        <begin position="226"/>
        <end position="230"/>
    </location>
</feature>
<feature type="strand" evidence="17">
    <location>
        <begin position="233"/>
        <end position="237"/>
    </location>
</feature>
<feature type="helix" evidence="17">
    <location>
        <begin position="242"/>
        <end position="258"/>
    </location>
</feature>
<evidence type="ECO:0000255" key="1"/>
<evidence type="ECO:0000269" key="2">
    <source>
    </source>
</evidence>
<evidence type="ECO:0000269" key="3">
    <source>
    </source>
</evidence>
<evidence type="ECO:0000269" key="4">
    <source>
    </source>
</evidence>
<evidence type="ECO:0000269" key="5">
    <source>
    </source>
</evidence>
<evidence type="ECO:0000269" key="6">
    <source>
    </source>
</evidence>
<evidence type="ECO:0000269" key="7">
    <source>
    </source>
</evidence>
<evidence type="ECO:0000269" key="8">
    <source>
    </source>
</evidence>
<evidence type="ECO:0000269" key="9">
    <source>
    </source>
</evidence>
<evidence type="ECO:0000269" key="10">
    <source>
    </source>
</evidence>
<evidence type="ECO:0000269" key="11">
    <source>
    </source>
</evidence>
<evidence type="ECO:0000305" key="12"/>
<evidence type="ECO:0000305" key="13">
    <source>
    </source>
</evidence>
<evidence type="ECO:0007744" key="14">
    <source>
    </source>
</evidence>
<evidence type="ECO:0007744" key="15">
    <source>
    </source>
</evidence>
<evidence type="ECO:0007744" key="16">
    <source>
    </source>
</evidence>
<evidence type="ECO:0007829" key="17">
    <source>
        <dbReference type="PDB" id="1P5Z"/>
    </source>
</evidence>
<evidence type="ECO:0007829" key="18">
    <source>
        <dbReference type="PDB" id="2A2Z"/>
    </source>
</evidence>
<evidence type="ECO:0007829" key="19">
    <source>
        <dbReference type="PDB" id="2NO7"/>
    </source>
</evidence>
<evidence type="ECO:0007829" key="20">
    <source>
        <dbReference type="PDB" id="2ZI6"/>
    </source>
</evidence>
<dbReference type="EC" id="2.7.1.74" evidence="2 4 5 7 8 9"/>
<dbReference type="EC" id="2.7.1.76" evidence="4 5 7"/>
<dbReference type="EC" id="2.7.1.113" evidence="5 7"/>
<dbReference type="EMBL" id="M60527">
    <property type="protein sequence ID" value="AAA35752.1"/>
    <property type="molecule type" value="mRNA"/>
</dbReference>
<dbReference type="EMBL" id="AK313523">
    <property type="protein sequence ID" value="BAG36303.1"/>
    <property type="molecule type" value="mRNA"/>
</dbReference>
<dbReference type="EMBL" id="CR536527">
    <property type="protein sequence ID" value="CAG38764.1"/>
    <property type="molecule type" value="mRNA"/>
</dbReference>
<dbReference type="EMBL" id="CR541876">
    <property type="protein sequence ID" value="CAG46674.1"/>
    <property type="molecule type" value="mRNA"/>
</dbReference>
<dbReference type="EMBL" id="BT019941">
    <property type="protein sequence ID" value="AAV38744.1"/>
    <property type="molecule type" value="mRNA"/>
</dbReference>
<dbReference type="EMBL" id="BT019942">
    <property type="protein sequence ID" value="AAV38745.1"/>
    <property type="molecule type" value="mRNA"/>
</dbReference>
<dbReference type="EMBL" id="CH471057">
    <property type="protein sequence ID" value="EAX05637.1"/>
    <property type="molecule type" value="Genomic_DNA"/>
</dbReference>
<dbReference type="EMBL" id="BC103764">
    <property type="protein sequence ID" value="AAI03765.1"/>
    <property type="molecule type" value="mRNA"/>
</dbReference>
<dbReference type="EMBL" id="BC114617">
    <property type="protein sequence ID" value="AAI14618.1"/>
    <property type="molecule type" value="mRNA"/>
</dbReference>
<dbReference type="CCDS" id="CCDS3548.1"/>
<dbReference type="PIR" id="A38585">
    <property type="entry name" value="A38585"/>
</dbReference>
<dbReference type="RefSeq" id="NP_000779.1">
    <property type="nucleotide sequence ID" value="NM_000788.3"/>
</dbReference>
<dbReference type="PDB" id="1P5Z">
    <property type="method" value="X-ray"/>
    <property type="resolution" value="1.60 A"/>
    <property type="chains" value="B=1-260"/>
</dbReference>
<dbReference type="PDB" id="1P60">
    <property type="method" value="X-ray"/>
    <property type="resolution" value="1.96 A"/>
    <property type="chains" value="A/B=1-260"/>
</dbReference>
<dbReference type="PDB" id="1P61">
    <property type="method" value="X-ray"/>
    <property type="resolution" value="2.21 A"/>
    <property type="chains" value="B=1-260"/>
</dbReference>
<dbReference type="PDB" id="1P62">
    <property type="method" value="X-ray"/>
    <property type="resolution" value="1.90 A"/>
    <property type="chains" value="B=1-260"/>
</dbReference>
<dbReference type="PDB" id="2A2Z">
    <property type="method" value="X-ray"/>
    <property type="resolution" value="3.02 A"/>
    <property type="chains" value="A/B/C/D=1-260"/>
</dbReference>
<dbReference type="PDB" id="2A30">
    <property type="method" value="X-ray"/>
    <property type="resolution" value="3.02 A"/>
    <property type="chains" value="A/B/C/D=1-260"/>
</dbReference>
<dbReference type="PDB" id="2A7Q">
    <property type="method" value="X-ray"/>
    <property type="resolution" value="2.55 A"/>
    <property type="chains" value="A=1-260"/>
</dbReference>
<dbReference type="PDB" id="2NO0">
    <property type="method" value="X-ray"/>
    <property type="resolution" value="1.80 A"/>
    <property type="chains" value="A/B=1-260"/>
</dbReference>
<dbReference type="PDB" id="2NO1">
    <property type="method" value="X-ray"/>
    <property type="resolution" value="1.91 A"/>
    <property type="chains" value="A/B=1-260"/>
</dbReference>
<dbReference type="PDB" id="2NO6">
    <property type="method" value="X-ray"/>
    <property type="resolution" value="1.90 A"/>
    <property type="chains" value="A/B=1-260"/>
</dbReference>
<dbReference type="PDB" id="2NO7">
    <property type="method" value="X-ray"/>
    <property type="resolution" value="1.70 A"/>
    <property type="chains" value="A/B=1-260"/>
</dbReference>
<dbReference type="PDB" id="2NO9">
    <property type="method" value="X-ray"/>
    <property type="resolution" value="2.15 A"/>
    <property type="chains" value="A/B=1-260"/>
</dbReference>
<dbReference type="PDB" id="2NOA">
    <property type="method" value="X-ray"/>
    <property type="resolution" value="1.80 A"/>
    <property type="chains" value="A/B=1-260"/>
</dbReference>
<dbReference type="PDB" id="2QRN">
    <property type="method" value="X-ray"/>
    <property type="resolution" value="3.40 A"/>
    <property type="chains" value="A/B/C/D=1-260"/>
</dbReference>
<dbReference type="PDB" id="2QRO">
    <property type="method" value="X-ray"/>
    <property type="resolution" value="3.45 A"/>
    <property type="chains" value="A/B/C/D=1-260"/>
</dbReference>
<dbReference type="PDB" id="2ZI3">
    <property type="method" value="X-ray"/>
    <property type="resolution" value="2.30 A"/>
    <property type="chains" value="A/B=1-260"/>
</dbReference>
<dbReference type="PDB" id="2ZI4">
    <property type="method" value="X-ray"/>
    <property type="resolution" value="2.10 A"/>
    <property type="chains" value="A=1-260"/>
</dbReference>
<dbReference type="PDB" id="2ZI5">
    <property type="method" value="X-ray"/>
    <property type="resolution" value="1.77 A"/>
    <property type="chains" value="A/B/C/D=1-260"/>
</dbReference>
<dbReference type="PDB" id="2ZI6">
    <property type="method" value="X-ray"/>
    <property type="resolution" value="1.77 A"/>
    <property type="chains" value="A/B/C/D=1-260"/>
</dbReference>
<dbReference type="PDB" id="2ZI7">
    <property type="method" value="X-ray"/>
    <property type="resolution" value="1.97 A"/>
    <property type="chains" value="A/B=1-260"/>
</dbReference>
<dbReference type="PDB" id="2ZI9">
    <property type="method" value="X-ray"/>
    <property type="resolution" value="2.51 A"/>
    <property type="chains" value="A/B=1-260"/>
</dbReference>
<dbReference type="PDB" id="2ZIA">
    <property type="method" value="X-ray"/>
    <property type="resolution" value="1.80 A"/>
    <property type="chains" value="A/B=1-260"/>
</dbReference>
<dbReference type="PDB" id="3HP1">
    <property type="method" value="X-ray"/>
    <property type="resolution" value="2.31 A"/>
    <property type="chains" value="A=1-260"/>
</dbReference>
<dbReference type="PDB" id="3IPX">
    <property type="method" value="X-ray"/>
    <property type="resolution" value="2.00 A"/>
    <property type="chains" value="A=20-260"/>
</dbReference>
<dbReference type="PDB" id="3IPY">
    <property type="method" value="X-ray"/>
    <property type="resolution" value="2.54 A"/>
    <property type="chains" value="A/B=20-260"/>
</dbReference>
<dbReference type="PDB" id="3KFX">
    <property type="method" value="X-ray"/>
    <property type="resolution" value="1.96 A"/>
    <property type="chains" value="A/B=1-260"/>
</dbReference>
<dbReference type="PDB" id="3MJR">
    <property type="method" value="X-ray"/>
    <property type="resolution" value="2.10 A"/>
    <property type="chains" value="A/B/C/D=1-260"/>
</dbReference>
<dbReference type="PDB" id="3QEJ">
    <property type="method" value="X-ray"/>
    <property type="resolution" value="2.49 A"/>
    <property type="chains" value="A/B=1-260"/>
</dbReference>
<dbReference type="PDB" id="3QEN">
    <property type="method" value="X-ray"/>
    <property type="resolution" value="2.00 A"/>
    <property type="chains" value="A/B=1-260"/>
</dbReference>
<dbReference type="PDB" id="3QEO">
    <property type="method" value="X-ray"/>
    <property type="resolution" value="1.90 A"/>
    <property type="chains" value="A/B=1-260"/>
</dbReference>
<dbReference type="PDB" id="4JLJ">
    <property type="method" value="X-ray"/>
    <property type="resolution" value="2.00 A"/>
    <property type="chains" value="A/B=1-260"/>
</dbReference>
<dbReference type="PDB" id="4JLK">
    <property type="method" value="X-ray"/>
    <property type="resolution" value="1.89 A"/>
    <property type="chains" value="A/B=1-260"/>
</dbReference>
<dbReference type="PDB" id="4JLM">
    <property type="method" value="X-ray"/>
    <property type="resolution" value="2.18 A"/>
    <property type="chains" value="A/B=1-260"/>
</dbReference>
<dbReference type="PDB" id="4JLN">
    <property type="method" value="X-ray"/>
    <property type="resolution" value="2.15 A"/>
    <property type="chains" value="A/B=1-260"/>
</dbReference>
<dbReference type="PDB" id="4KCG">
    <property type="method" value="X-ray"/>
    <property type="resolution" value="2.09 A"/>
    <property type="chains" value="A/B=1-260"/>
</dbReference>
<dbReference type="PDB" id="4L5B">
    <property type="method" value="X-ray"/>
    <property type="resolution" value="1.94 A"/>
    <property type="chains" value="A/B=1-260"/>
</dbReference>
<dbReference type="PDB" id="4Q18">
    <property type="method" value="X-ray"/>
    <property type="resolution" value="2.00 A"/>
    <property type="chains" value="A/B=1-260"/>
</dbReference>
<dbReference type="PDB" id="4Q19">
    <property type="method" value="X-ray"/>
    <property type="resolution" value="2.09 A"/>
    <property type="chains" value="A/B=1-260"/>
</dbReference>
<dbReference type="PDB" id="4Q1A">
    <property type="method" value="X-ray"/>
    <property type="resolution" value="1.90 A"/>
    <property type="chains" value="A/B=1-260"/>
</dbReference>
<dbReference type="PDB" id="4Q1B">
    <property type="method" value="X-ray"/>
    <property type="resolution" value="2.15 A"/>
    <property type="chains" value="A/B=1-260"/>
</dbReference>
<dbReference type="PDB" id="4Q1C">
    <property type="method" value="X-ray"/>
    <property type="resolution" value="2.00 A"/>
    <property type="chains" value="A/B=1-260"/>
</dbReference>
<dbReference type="PDB" id="4Q1D">
    <property type="method" value="X-ray"/>
    <property type="resolution" value="2.00 A"/>
    <property type="chains" value="A/B=1-260"/>
</dbReference>
<dbReference type="PDB" id="4Q1E">
    <property type="method" value="X-ray"/>
    <property type="resolution" value="1.85 A"/>
    <property type="chains" value="A/B=1-260"/>
</dbReference>
<dbReference type="PDB" id="4Q1F">
    <property type="method" value="X-ray"/>
    <property type="resolution" value="2.10 A"/>
    <property type="chains" value="A/B=1-260"/>
</dbReference>
<dbReference type="PDB" id="5MQJ">
    <property type="method" value="X-ray"/>
    <property type="resolution" value="3.70 A"/>
    <property type="chains" value="A/B/C/D=2-260"/>
</dbReference>
<dbReference type="PDB" id="5MQL">
    <property type="method" value="X-ray"/>
    <property type="resolution" value="3.25 A"/>
    <property type="chains" value="A/B/C/D=1-260"/>
</dbReference>
<dbReference type="PDB" id="5MQT">
    <property type="method" value="X-ray"/>
    <property type="resolution" value="3.20 A"/>
    <property type="chains" value="A/B/C/D=1-260"/>
</dbReference>
<dbReference type="PDB" id="7ZI1">
    <property type="method" value="X-ray"/>
    <property type="resolution" value="1.85 A"/>
    <property type="chains" value="A=1-260"/>
</dbReference>
<dbReference type="PDB" id="7ZI2">
    <property type="method" value="X-ray"/>
    <property type="resolution" value="2.18 A"/>
    <property type="chains" value="A=1-260"/>
</dbReference>
<dbReference type="PDB" id="7ZI3">
    <property type="method" value="X-ray"/>
    <property type="resolution" value="1.90 A"/>
    <property type="chains" value="A=1-260"/>
</dbReference>
<dbReference type="PDB" id="7ZI5">
    <property type="method" value="X-ray"/>
    <property type="resolution" value="2.00 A"/>
    <property type="chains" value="A=1-260"/>
</dbReference>
<dbReference type="PDB" id="7ZI6">
    <property type="method" value="X-ray"/>
    <property type="resolution" value="2.10 A"/>
    <property type="chains" value="A=1-260"/>
</dbReference>
<dbReference type="PDB" id="7ZI7">
    <property type="method" value="X-ray"/>
    <property type="resolution" value="1.80 A"/>
    <property type="chains" value="A=1-260"/>
</dbReference>
<dbReference type="PDB" id="7ZI8">
    <property type="method" value="X-ray"/>
    <property type="resolution" value="1.99 A"/>
    <property type="chains" value="A=1-260"/>
</dbReference>
<dbReference type="PDB" id="7ZI9">
    <property type="method" value="X-ray"/>
    <property type="resolution" value="1.80 A"/>
    <property type="chains" value="A=1-260"/>
</dbReference>
<dbReference type="PDB" id="7ZIA">
    <property type="method" value="X-ray"/>
    <property type="resolution" value="1.70 A"/>
    <property type="chains" value="A=1-260"/>
</dbReference>
<dbReference type="PDB" id="7ZIB">
    <property type="method" value="X-ray"/>
    <property type="resolution" value="1.95 A"/>
    <property type="chains" value="A=1-260"/>
</dbReference>
<dbReference type="PDB" id="8OOJ">
    <property type="method" value="X-ray"/>
    <property type="resolution" value="2.10 A"/>
    <property type="chains" value="A/B/C/D=1-260"/>
</dbReference>
<dbReference type="PDBsum" id="1P5Z"/>
<dbReference type="PDBsum" id="1P60"/>
<dbReference type="PDBsum" id="1P61"/>
<dbReference type="PDBsum" id="1P62"/>
<dbReference type="PDBsum" id="2A2Z"/>
<dbReference type="PDBsum" id="2A30"/>
<dbReference type="PDBsum" id="2A7Q"/>
<dbReference type="PDBsum" id="2NO0"/>
<dbReference type="PDBsum" id="2NO1"/>
<dbReference type="PDBsum" id="2NO6"/>
<dbReference type="PDBsum" id="2NO7"/>
<dbReference type="PDBsum" id="2NO9"/>
<dbReference type="PDBsum" id="2NOA"/>
<dbReference type="PDBsum" id="2QRN"/>
<dbReference type="PDBsum" id="2QRO"/>
<dbReference type="PDBsum" id="2ZI3"/>
<dbReference type="PDBsum" id="2ZI4"/>
<dbReference type="PDBsum" id="2ZI5"/>
<dbReference type="PDBsum" id="2ZI6"/>
<dbReference type="PDBsum" id="2ZI7"/>
<dbReference type="PDBsum" id="2ZI9"/>
<dbReference type="PDBsum" id="2ZIA"/>
<dbReference type="PDBsum" id="3HP1"/>
<dbReference type="PDBsum" id="3IPX"/>
<dbReference type="PDBsum" id="3IPY"/>
<dbReference type="PDBsum" id="3KFX"/>
<dbReference type="PDBsum" id="3MJR"/>
<dbReference type="PDBsum" id="3QEJ"/>
<dbReference type="PDBsum" id="3QEN"/>
<dbReference type="PDBsum" id="3QEO"/>
<dbReference type="PDBsum" id="4JLJ"/>
<dbReference type="PDBsum" id="4JLK"/>
<dbReference type="PDBsum" id="4JLM"/>
<dbReference type="PDBsum" id="4JLN"/>
<dbReference type="PDBsum" id="4KCG"/>
<dbReference type="PDBsum" id="4L5B"/>
<dbReference type="PDBsum" id="4Q18"/>
<dbReference type="PDBsum" id="4Q19"/>
<dbReference type="PDBsum" id="4Q1A"/>
<dbReference type="PDBsum" id="4Q1B"/>
<dbReference type="PDBsum" id="4Q1C"/>
<dbReference type="PDBsum" id="4Q1D"/>
<dbReference type="PDBsum" id="4Q1E"/>
<dbReference type="PDBsum" id="4Q1F"/>
<dbReference type="PDBsum" id="5MQJ"/>
<dbReference type="PDBsum" id="5MQL"/>
<dbReference type="PDBsum" id="5MQT"/>
<dbReference type="PDBsum" id="7ZI1"/>
<dbReference type="PDBsum" id="7ZI2"/>
<dbReference type="PDBsum" id="7ZI3"/>
<dbReference type="PDBsum" id="7ZI5"/>
<dbReference type="PDBsum" id="7ZI6"/>
<dbReference type="PDBsum" id="7ZI7"/>
<dbReference type="PDBsum" id="7ZI8"/>
<dbReference type="PDBsum" id="7ZI9"/>
<dbReference type="PDBsum" id="7ZIA"/>
<dbReference type="PDBsum" id="7ZIB"/>
<dbReference type="PDBsum" id="8OOJ"/>
<dbReference type="SMR" id="P27707"/>
<dbReference type="BioGRID" id="108001">
    <property type="interactions" value="74"/>
</dbReference>
<dbReference type="FunCoup" id="P27707">
    <property type="interactions" value="1685"/>
</dbReference>
<dbReference type="IntAct" id="P27707">
    <property type="interactions" value="23"/>
</dbReference>
<dbReference type="MINT" id="P27707"/>
<dbReference type="STRING" id="9606.ENSP00000286648"/>
<dbReference type="BindingDB" id="P27707"/>
<dbReference type="ChEMBL" id="CHEMBL2447"/>
<dbReference type="DrugBank" id="DB02594">
    <property type="generic name" value="2'-Deoxycytidine"/>
</dbReference>
<dbReference type="DrugBank" id="DB00242">
    <property type="generic name" value="Cladribine"/>
</dbReference>
<dbReference type="DrugBank" id="DB00631">
    <property type="generic name" value="Clofarabine"/>
</dbReference>
<dbReference type="DrugBank" id="DB00987">
    <property type="generic name" value="Cytarabine"/>
</dbReference>
<dbReference type="DrugBank" id="DB01262">
    <property type="generic name" value="Decitabine"/>
</dbReference>
<dbReference type="DrugBank" id="DB05494">
    <property type="generic name" value="Elacytarabine"/>
</dbReference>
<dbReference type="DrugBank" id="DB00879">
    <property type="generic name" value="Emtricitabine"/>
</dbReference>
<dbReference type="DrugBank" id="DB01073">
    <property type="generic name" value="Fludarabine"/>
</dbReference>
<dbReference type="DrugBank" id="DB00441">
    <property type="generic name" value="Gemcitabine"/>
</dbReference>
<dbReference type="DrugBank" id="DB00709">
    <property type="generic name" value="Lamivudine"/>
</dbReference>
<dbReference type="DrugBank" id="DB01280">
    <property type="generic name" value="Nelarabine"/>
</dbReference>
<dbReference type="DrugBank" id="DB00642">
    <property type="generic name" value="Pemetrexed"/>
</dbReference>
<dbReference type="DrugBank" id="DB04961">
    <property type="generic name" value="Troxacitabine"/>
</dbReference>
<dbReference type="DrugBank" id="DB00943">
    <property type="generic name" value="Zalcitabine"/>
</dbReference>
<dbReference type="DrugCentral" id="P27707"/>
<dbReference type="GlyGen" id="P27707">
    <property type="glycosylation" value="1 site, 1 O-linked glycan (1 site)"/>
</dbReference>
<dbReference type="iPTMnet" id="P27707"/>
<dbReference type="PhosphoSitePlus" id="P27707"/>
<dbReference type="BioMuta" id="DCK"/>
<dbReference type="DMDM" id="118447"/>
<dbReference type="CPTAC" id="CPTAC-3198"/>
<dbReference type="CPTAC" id="CPTAC-3199"/>
<dbReference type="jPOST" id="P27707"/>
<dbReference type="MassIVE" id="P27707"/>
<dbReference type="PaxDb" id="9606-ENSP00000286648"/>
<dbReference type="PeptideAtlas" id="P27707"/>
<dbReference type="ProteomicsDB" id="54408"/>
<dbReference type="Pumba" id="P27707"/>
<dbReference type="Antibodypedia" id="12905">
    <property type="antibodies" value="626 antibodies from 38 providers"/>
</dbReference>
<dbReference type="DNASU" id="1633"/>
<dbReference type="Ensembl" id="ENST00000286648.10">
    <property type="protein sequence ID" value="ENSP00000286648.5"/>
    <property type="gene ID" value="ENSG00000156136.10"/>
</dbReference>
<dbReference type="GeneID" id="1633"/>
<dbReference type="KEGG" id="hsa:1633"/>
<dbReference type="MANE-Select" id="ENST00000286648.10">
    <property type="protein sequence ID" value="ENSP00000286648.5"/>
    <property type="RefSeq nucleotide sequence ID" value="NM_000788.3"/>
    <property type="RefSeq protein sequence ID" value="NP_000779.1"/>
</dbReference>
<dbReference type="UCSC" id="uc003hfx.4">
    <property type="organism name" value="human"/>
</dbReference>
<dbReference type="AGR" id="HGNC:2704"/>
<dbReference type="CTD" id="1633"/>
<dbReference type="DisGeNET" id="1633"/>
<dbReference type="GeneCards" id="DCK"/>
<dbReference type="HGNC" id="HGNC:2704">
    <property type="gene designation" value="DCK"/>
</dbReference>
<dbReference type="HPA" id="ENSG00000156136">
    <property type="expression patterns" value="Group enriched (bone marrow, lymphoid tissue)"/>
</dbReference>
<dbReference type="MalaCards" id="DCK"/>
<dbReference type="MIM" id="125450">
    <property type="type" value="gene"/>
</dbReference>
<dbReference type="neXtProt" id="NX_P27707"/>
<dbReference type="OpenTargets" id="ENSG00000156136"/>
<dbReference type="PharmGKB" id="PA137"/>
<dbReference type="VEuPathDB" id="HostDB:ENSG00000156136"/>
<dbReference type="eggNOG" id="KOG4235">
    <property type="taxonomic scope" value="Eukaryota"/>
</dbReference>
<dbReference type="GeneTree" id="ENSGT00940000157321"/>
<dbReference type="HOGENOM" id="CLU_030466_1_1_1"/>
<dbReference type="InParanoid" id="P27707"/>
<dbReference type="OMA" id="EAMVMTP"/>
<dbReference type="OrthoDB" id="567086at2759"/>
<dbReference type="PAN-GO" id="P27707">
    <property type="GO annotations" value="3 GO annotations based on evolutionary models"/>
</dbReference>
<dbReference type="PhylomeDB" id="P27707"/>
<dbReference type="TreeFam" id="TF324413"/>
<dbReference type="BioCyc" id="MetaCyc:HS08100-MONOMER"/>
<dbReference type="BRENDA" id="2.7.1.74">
    <property type="organism ID" value="2681"/>
</dbReference>
<dbReference type="PathwayCommons" id="P27707"/>
<dbReference type="Reactome" id="R-HSA-73614">
    <property type="pathway name" value="Pyrimidine salvage"/>
</dbReference>
<dbReference type="Reactome" id="R-HSA-74217">
    <property type="pathway name" value="Purine salvage"/>
</dbReference>
<dbReference type="SABIO-RK" id="P27707"/>
<dbReference type="SignaLink" id="P27707"/>
<dbReference type="SIGNOR" id="P27707"/>
<dbReference type="BioGRID-ORCS" id="1633">
    <property type="hits" value="15 hits in 1164 CRISPR screens"/>
</dbReference>
<dbReference type="ChiTaRS" id="DCK">
    <property type="organism name" value="human"/>
</dbReference>
<dbReference type="EvolutionaryTrace" id="P27707"/>
<dbReference type="GeneWiki" id="Deoxycytidine_kinase"/>
<dbReference type="GenomeRNAi" id="1633"/>
<dbReference type="Pharos" id="P27707">
    <property type="development level" value="Tchem"/>
</dbReference>
<dbReference type="PRO" id="PR:P27707"/>
<dbReference type="Proteomes" id="UP000005640">
    <property type="component" value="Chromosome 4"/>
</dbReference>
<dbReference type="RNAct" id="P27707">
    <property type="molecule type" value="protein"/>
</dbReference>
<dbReference type="Bgee" id="ENSG00000156136">
    <property type="expression patterns" value="Expressed in trabecular bone tissue and 202 other cell types or tissues"/>
</dbReference>
<dbReference type="ExpressionAtlas" id="P27707">
    <property type="expression patterns" value="baseline and differential"/>
</dbReference>
<dbReference type="GO" id="GO:0005737">
    <property type="term" value="C:cytoplasm"/>
    <property type="evidence" value="ECO:0000318"/>
    <property type="project" value="GO_Central"/>
</dbReference>
<dbReference type="GO" id="GO:0005829">
    <property type="term" value="C:cytosol"/>
    <property type="evidence" value="ECO:0000304"/>
    <property type="project" value="Reactome"/>
</dbReference>
<dbReference type="GO" id="GO:0005739">
    <property type="term" value="C:mitochondrion"/>
    <property type="evidence" value="ECO:0000318"/>
    <property type="project" value="GO_Central"/>
</dbReference>
<dbReference type="GO" id="GO:0005654">
    <property type="term" value="C:nucleoplasm"/>
    <property type="evidence" value="ECO:0000314"/>
    <property type="project" value="HPA"/>
</dbReference>
<dbReference type="GO" id="GO:0005524">
    <property type="term" value="F:ATP binding"/>
    <property type="evidence" value="ECO:0007669"/>
    <property type="project" value="UniProtKB-KW"/>
</dbReference>
<dbReference type="GO" id="GO:0043771">
    <property type="term" value="F:cytidine kinase activity"/>
    <property type="evidence" value="ECO:0000314"/>
    <property type="project" value="FlyBase"/>
</dbReference>
<dbReference type="GO" id="GO:0004136">
    <property type="term" value="F:deoxyadenosine kinase activity"/>
    <property type="evidence" value="ECO:0000314"/>
    <property type="project" value="FlyBase"/>
</dbReference>
<dbReference type="GO" id="GO:0004137">
    <property type="term" value="F:deoxycytidine kinase activity"/>
    <property type="evidence" value="ECO:0000314"/>
    <property type="project" value="UniProtKB"/>
</dbReference>
<dbReference type="GO" id="GO:0004138">
    <property type="term" value="F:deoxyguanosine kinase activity"/>
    <property type="evidence" value="ECO:0000314"/>
    <property type="project" value="MGI"/>
</dbReference>
<dbReference type="GO" id="GO:0042803">
    <property type="term" value="F:protein homodimerization activity"/>
    <property type="evidence" value="ECO:0000353"/>
    <property type="project" value="UniProtKB"/>
</dbReference>
<dbReference type="GO" id="GO:0106383">
    <property type="term" value="P:dAMP salvage"/>
    <property type="evidence" value="ECO:0007669"/>
    <property type="project" value="Ensembl"/>
</dbReference>
<dbReference type="GO" id="GO:1901293">
    <property type="term" value="P:nucleoside phosphate biosynthetic process"/>
    <property type="evidence" value="ECO:0000314"/>
    <property type="project" value="FlyBase"/>
</dbReference>
<dbReference type="GO" id="GO:0006220">
    <property type="term" value="P:pyrimidine nucleotide metabolic process"/>
    <property type="evidence" value="ECO:0000314"/>
    <property type="project" value="UniProtKB"/>
</dbReference>
<dbReference type="CDD" id="cd01673">
    <property type="entry name" value="dNK"/>
    <property type="match status" value="1"/>
</dbReference>
<dbReference type="FunFam" id="3.40.50.300:FF:000461">
    <property type="entry name" value="Deoxycytidine kinase"/>
    <property type="match status" value="1"/>
</dbReference>
<dbReference type="Gene3D" id="3.40.50.300">
    <property type="entry name" value="P-loop containing nucleotide triphosphate hydrolases"/>
    <property type="match status" value="1"/>
</dbReference>
<dbReference type="InterPro" id="IPR002624">
    <property type="entry name" value="DCK/DGK"/>
</dbReference>
<dbReference type="InterPro" id="IPR050566">
    <property type="entry name" value="Deoxyribonucleoside_kinase"/>
</dbReference>
<dbReference type="InterPro" id="IPR031314">
    <property type="entry name" value="DNK_dom"/>
</dbReference>
<dbReference type="InterPro" id="IPR027417">
    <property type="entry name" value="P-loop_NTPase"/>
</dbReference>
<dbReference type="PANTHER" id="PTHR10513:SF19">
    <property type="entry name" value="DEOXYCYTIDINE KINASE"/>
    <property type="match status" value="1"/>
</dbReference>
<dbReference type="PANTHER" id="PTHR10513">
    <property type="entry name" value="DEOXYNUCLEOSIDE KINASE"/>
    <property type="match status" value="1"/>
</dbReference>
<dbReference type="Pfam" id="PF01712">
    <property type="entry name" value="dNK"/>
    <property type="match status" value="1"/>
</dbReference>
<dbReference type="PIRSF" id="PIRSF000705">
    <property type="entry name" value="DNK"/>
    <property type="match status" value="1"/>
</dbReference>
<dbReference type="SUPFAM" id="SSF52540">
    <property type="entry name" value="P-loop containing nucleoside triphosphate hydrolases"/>
    <property type="match status" value="1"/>
</dbReference>
<accession>P27707</accession>
<accession>B2R8V6</accession>
<accession>Q5TZY7</accession>
<accession>Q6FI11</accession>
<protein>
    <recommendedName>
        <fullName>Deoxycytidine kinase</fullName>
        <shortName>dCK</shortName>
        <ecNumber evidence="2 4 5 7 8 9">2.7.1.74</ecNumber>
    </recommendedName>
    <alternativeName>
        <fullName>Deoxyadenosine kinase</fullName>
        <ecNumber evidence="4 5 7">2.7.1.76</ecNumber>
    </alternativeName>
    <alternativeName>
        <fullName>Deoxyguanosine kinase</fullName>
        <ecNumber evidence="5 7">2.7.1.113</ecNumber>
    </alternativeName>
</protein>
<gene>
    <name type="primary">DCK</name>
</gene>
<proteinExistence type="evidence at protein level"/>
<organism>
    <name type="scientific">Homo sapiens</name>
    <name type="common">Human</name>
    <dbReference type="NCBI Taxonomy" id="9606"/>
    <lineage>
        <taxon>Eukaryota</taxon>
        <taxon>Metazoa</taxon>
        <taxon>Chordata</taxon>
        <taxon>Craniata</taxon>
        <taxon>Vertebrata</taxon>
        <taxon>Euteleostomi</taxon>
        <taxon>Mammalia</taxon>
        <taxon>Eutheria</taxon>
        <taxon>Euarchontoglires</taxon>
        <taxon>Primates</taxon>
        <taxon>Haplorrhini</taxon>
        <taxon>Catarrhini</taxon>
        <taxon>Hominidae</taxon>
        <taxon>Homo</taxon>
    </lineage>
</organism>
<reference key="1">
    <citation type="journal article" date="1991" name="Proc. Natl. Acad. Sci. U.S.A.">
        <title>Cloning and expression of human deoxycytidine kinase cDNA.</title>
        <authorList>
            <person name="Chottiner E.G."/>
            <person name="Shewach D.S."/>
            <person name="Datta N.S."/>
            <person name="Ashcraft E."/>
            <person name="Gribbin D."/>
            <person name="Ginsburg D."/>
            <person name="Fox I.H."/>
            <person name="Mitchell B.S."/>
        </authorList>
    </citation>
    <scope>NUCLEOTIDE SEQUENCE [MRNA]</scope>
    <scope>PROTEIN SEQUENCE OF 58-70; 119-127 AND 189-192</scope>
    <scope>FUNCTION</scope>
    <scope>CATALYTIC ACTIVITY</scope>
</reference>
<reference key="2">
    <citation type="journal article" date="2004" name="Nat. Genet.">
        <title>Complete sequencing and characterization of 21,243 full-length human cDNAs.</title>
        <authorList>
            <person name="Ota T."/>
            <person name="Suzuki Y."/>
            <person name="Nishikawa T."/>
            <person name="Otsuki T."/>
            <person name="Sugiyama T."/>
            <person name="Irie R."/>
            <person name="Wakamatsu A."/>
            <person name="Hayashi K."/>
            <person name="Sato H."/>
            <person name="Nagai K."/>
            <person name="Kimura K."/>
            <person name="Makita H."/>
            <person name="Sekine M."/>
            <person name="Obayashi M."/>
            <person name="Nishi T."/>
            <person name="Shibahara T."/>
            <person name="Tanaka T."/>
            <person name="Ishii S."/>
            <person name="Yamamoto J."/>
            <person name="Saito K."/>
            <person name="Kawai Y."/>
            <person name="Isono Y."/>
            <person name="Nakamura Y."/>
            <person name="Nagahari K."/>
            <person name="Murakami K."/>
            <person name="Yasuda T."/>
            <person name="Iwayanagi T."/>
            <person name="Wagatsuma M."/>
            <person name="Shiratori A."/>
            <person name="Sudo H."/>
            <person name="Hosoiri T."/>
            <person name="Kaku Y."/>
            <person name="Kodaira H."/>
            <person name="Kondo H."/>
            <person name="Sugawara M."/>
            <person name="Takahashi M."/>
            <person name="Kanda K."/>
            <person name="Yokoi T."/>
            <person name="Furuya T."/>
            <person name="Kikkawa E."/>
            <person name="Omura Y."/>
            <person name="Abe K."/>
            <person name="Kamihara K."/>
            <person name="Katsuta N."/>
            <person name="Sato K."/>
            <person name="Tanikawa M."/>
            <person name="Yamazaki M."/>
            <person name="Ninomiya K."/>
            <person name="Ishibashi T."/>
            <person name="Yamashita H."/>
            <person name="Murakawa K."/>
            <person name="Fujimori K."/>
            <person name="Tanai H."/>
            <person name="Kimata M."/>
            <person name="Watanabe M."/>
            <person name="Hiraoka S."/>
            <person name="Chiba Y."/>
            <person name="Ishida S."/>
            <person name="Ono Y."/>
            <person name="Takiguchi S."/>
            <person name="Watanabe S."/>
            <person name="Yosida M."/>
            <person name="Hotuta T."/>
            <person name="Kusano J."/>
            <person name="Kanehori K."/>
            <person name="Takahashi-Fujii A."/>
            <person name="Hara H."/>
            <person name="Tanase T.-O."/>
            <person name="Nomura Y."/>
            <person name="Togiya S."/>
            <person name="Komai F."/>
            <person name="Hara R."/>
            <person name="Takeuchi K."/>
            <person name="Arita M."/>
            <person name="Imose N."/>
            <person name="Musashino K."/>
            <person name="Yuuki H."/>
            <person name="Oshima A."/>
            <person name="Sasaki N."/>
            <person name="Aotsuka S."/>
            <person name="Yoshikawa Y."/>
            <person name="Matsunawa H."/>
            <person name="Ichihara T."/>
            <person name="Shiohata N."/>
            <person name="Sano S."/>
            <person name="Moriya S."/>
            <person name="Momiyama H."/>
            <person name="Satoh N."/>
            <person name="Takami S."/>
            <person name="Terashima Y."/>
            <person name="Suzuki O."/>
            <person name="Nakagawa S."/>
            <person name="Senoh A."/>
            <person name="Mizoguchi H."/>
            <person name="Goto Y."/>
            <person name="Shimizu F."/>
            <person name="Wakebe H."/>
            <person name="Hishigaki H."/>
            <person name="Watanabe T."/>
            <person name="Sugiyama A."/>
            <person name="Takemoto M."/>
            <person name="Kawakami B."/>
            <person name="Yamazaki M."/>
            <person name="Watanabe K."/>
            <person name="Kumagai A."/>
            <person name="Itakura S."/>
            <person name="Fukuzumi Y."/>
            <person name="Fujimori Y."/>
            <person name="Komiyama M."/>
            <person name="Tashiro H."/>
            <person name="Tanigami A."/>
            <person name="Fujiwara T."/>
            <person name="Ono T."/>
            <person name="Yamada K."/>
            <person name="Fujii Y."/>
            <person name="Ozaki K."/>
            <person name="Hirao M."/>
            <person name="Ohmori Y."/>
            <person name="Kawabata A."/>
            <person name="Hikiji T."/>
            <person name="Kobatake N."/>
            <person name="Inagaki H."/>
            <person name="Ikema Y."/>
            <person name="Okamoto S."/>
            <person name="Okitani R."/>
            <person name="Kawakami T."/>
            <person name="Noguchi S."/>
            <person name="Itoh T."/>
            <person name="Shigeta K."/>
            <person name="Senba T."/>
            <person name="Matsumura K."/>
            <person name="Nakajima Y."/>
            <person name="Mizuno T."/>
            <person name="Morinaga M."/>
            <person name="Sasaki M."/>
            <person name="Togashi T."/>
            <person name="Oyama M."/>
            <person name="Hata H."/>
            <person name="Watanabe M."/>
            <person name="Komatsu T."/>
            <person name="Mizushima-Sugano J."/>
            <person name="Satoh T."/>
            <person name="Shirai Y."/>
            <person name="Takahashi Y."/>
            <person name="Nakagawa K."/>
            <person name="Okumura K."/>
            <person name="Nagase T."/>
            <person name="Nomura N."/>
            <person name="Kikuchi H."/>
            <person name="Masuho Y."/>
            <person name="Yamashita R."/>
            <person name="Nakai K."/>
            <person name="Yada T."/>
            <person name="Nakamura Y."/>
            <person name="Ohara O."/>
            <person name="Isogai T."/>
            <person name="Sugano S."/>
        </authorList>
    </citation>
    <scope>NUCLEOTIDE SEQUENCE [LARGE SCALE MRNA]</scope>
</reference>
<reference key="3">
    <citation type="submission" date="2004-06" db="EMBL/GenBank/DDBJ databases">
        <title>Cloning of human full open reading frames in Gateway(TM) system entry vector (pDONR201).</title>
        <authorList>
            <person name="Halleck A."/>
            <person name="Ebert L."/>
            <person name="Mkoundinya M."/>
            <person name="Schick M."/>
            <person name="Eisenstein S."/>
            <person name="Neubert P."/>
            <person name="Kstrang K."/>
            <person name="Schatten R."/>
            <person name="Shen B."/>
            <person name="Henze S."/>
            <person name="Mar W."/>
            <person name="Korn B."/>
            <person name="Zuo D."/>
            <person name="Hu Y."/>
            <person name="LaBaer J."/>
        </authorList>
    </citation>
    <scope>NUCLEOTIDE SEQUENCE [LARGE SCALE MRNA]</scope>
</reference>
<reference key="4">
    <citation type="submission" date="2004-10" db="EMBL/GenBank/DDBJ databases">
        <title>Cloning of human full-length CDSs in BD Creator(TM) system donor vector.</title>
        <authorList>
            <person name="Kalnine N."/>
            <person name="Chen X."/>
            <person name="Rolfs A."/>
            <person name="Halleck A."/>
            <person name="Hines L."/>
            <person name="Eisenstein S."/>
            <person name="Koundinya M."/>
            <person name="Raphael J."/>
            <person name="Moreira D."/>
            <person name="Kelley T."/>
            <person name="LaBaer J."/>
            <person name="Lin Y."/>
            <person name="Phelan M."/>
            <person name="Farmer A."/>
        </authorList>
    </citation>
    <scope>NUCLEOTIDE SEQUENCE [LARGE SCALE MRNA]</scope>
</reference>
<reference key="5">
    <citation type="submission" date="2005-07" db="EMBL/GenBank/DDBJ databases">
        <authorList>
            <person name="Mural R.J."/>
            <person name="Istrail S."/>
            <person name="Sutton G.G."/>
            <person name="Florea L."/>
            <person name="Halpern A.L."/>
            <person name="Mobarry C.M."/>
            <person name="Lippert R."/>
            <person name="Walenz B."/>
            <person name="Shatkay H."/>
            <person name="Dew I."/>
            <person name="Miller J.R."/>
            <person name="Flanigan M.J."/>
            <person name="Edwards N.J."/>
            <person name="Bolanos R."/>
            <person name="Fasulo D."/>
            <person name="Halldorsson B.V."/>
            <person name="Hannenhalli S."/>
            <person name="Turner R."/>
            <person name="Yooseph S."/>
            <person name="Lu F."/>
            <person name="Nusskern D.R."/>
            <person name="Shue B.C."/>
            <person name="Zheng X.H."/>
            <person name="Zhong F."/>
            <person name="Delcher A.L."/>
            <person name="Huson D.H."/>
            <person name="Kravitz S.A."/>
            <person name="Mouchard L."/>
            <person name="Reinert K."/>
            <person name="Remington K.A."/>
            <person name="Clark A.G."/>
            <person name="Waterman M.S."/>
            <person name="Eichler E.E."/>
            <person name="Adams M.D."/>
            <person name="Hunkapiller M.W."/>
            <person name="Myers E.W."/>
            <person name="Venter J.C."/>
        </authorList>
    </citation>
    <scope>NUCLEOTIDE SEQUENCE [LARGE SCALE GENOMIC DNA]</scope>
</reference>
<reference key="6">
    <citation type="journal article" date="2004" name="Genome Res.">
        <title>The status, quality, and expansion of the NIH full-length cDNA project: the Mammalian Gene Collection (MGC).</title>
        <authorList>
            <consortium name="The MGC Project Team"/>
        </authorList>
    </citation>
    <scope>NUCLEOTIDE SEQUENCE [LARGE SCALE MRNA]</scope>
    <source>
        <tissue>Uterus</tissue>
    </source>
</reference>
<reference key="7">
    <citation type="journal article" date="1991" name="FEBS Lett.">
        <title>Characterization of human deoxycytidine kinase. Correlation with cDNA sequences.</title>
        <authorList>
            <person name="Eriksson S."/>
            <person name="Cederlund E."/>
            <person name="Bergman T."/>
            <person name="Joernvall H."/>
            <person name="Bohman C."/>
        </authorList>
    </citation>
    <scope>PARTIAL PROTEIN SEQUENCE</scope>
    <scope>CHARACTERIZATION</scope>
</reference>
<reference key="8">
    <citation type="journal article" date="1997" name="Proc. Natl. Acad. Sci. U.S.A.">
        <title>Human deoxycytidine kinase is located in the cell nucleus.</title>
        <authorList>
            <person name="Johansson M."/>
            <person name="Brismar S."/>
            <person name="Karlsson A."/>
        </authorList>
    </citation>
    <scope>SUBCELLULAR LOCATION</scope>
</reference>
<reference key="9">
    <citation type="journal article" date="2007" name="Science">
        <title>ATM and ATR substrate analysis reveals extensive protein networks responsive to DNA damage.</title>
        <authorList>
            <person name="Matsuoka S."/>
            <person name="Ballif B.A."/>
            <person name="Smogorzewska A."/>
            <person name="McDonald E.R. III"/>
            <person name="Hurov K.E."/>
            <person name="Luo J."/>
            <person name="Bakalarski C.E."/>
            <person name="Zhao Z."/>
            <person name="Solimini N."/>
            <person name="Lerenthal Y."/>
            <person name="Shiloh Y."/>
            <person name="Gygi S.P."/>
            <person name="Elledge S.J."/>
        </authorList>
    </citation>
    <scope>IDENTIFICATION BY MASS SPECTROMETRY [LARGE SCALE ANALYSIS]</scope>
    <source>
        <tissue>Embryonic kidney</tissue>
    </source>
</reference>
<reference key="10">
    <citation type="journal article" date="2008" name="Mol. Cell">
        <title>Kinase-selective enrichment enables quantitative phosphoproteomics of the kinome across the cell cycle.</title>
        <authorList>
            <person name="Daub H."/>
            <person name="Olsen J.V."/>
            <person name="Bairlein M."/>
            <person name="Gnad F."/>
            <person name="Oppermann F.S."/>
            <person name="Korner R."/>
            <person name="Greff Z."/>
            <person name="Keri G."/>
            <person name="Stemmann O."/>
            <person name="Mann M."/>
        </authorList>
    </citation>
    <scope>IDENTIFICATION BY MASS SPECTROMETRY [LARGE SCALE ANALYSIS]</scope>
    <source>
        <tissue>Cervix carcinoma</tissue>
    </source>
</reference>
<reference key="11">
    <citation type="journal article" date="2008" name="Proc. Natl. Acad. Sci. U.S.A.">
        <title>A quantitative atlas of mitotic phosphorylation.</title>
        <authorList>
            <person name="Dephoure N."/>
            <person name="Zhou C."/>
            <person name="Villen J."/>
            <person name="Beausoleil S.A."/>
            <person name="Bakalarski C.E."/>
            <person name="Elledge S.J."/>
            <person name="Gygi S.P."/>
        </authorList>
    </citation>
    <scope>PHOSPHORYLATION [LARGE SCALE ANALYSIS] AT SER-74</scope>
    <scope>IDENTIFICATION BY MASS SPECTROMETRY [LARGE SCALE ANALYSIS]</scope>
    <source>
        <tissue>Cervix carcinoma</tissue>
    </source>
</reference>
<reference key="12">
    <citation type="journal article" date="2009" name="Mol. Cell. Proteomics">
        <title>Large-scale proteomics analysis of the human kinome.</title>
        <authorList>
            <person name="Oppermann F.S."/>
            <person name="Gnad F."/>
            <person name="Olsen J.V."/>
            <person name="Hornberger R."/>
            <person name="Greff Z."/>
            <person name="Keri G."/>
            <person name="Mann M."/>
            <person name="Daub H."/>
        </authorList>
    </citation>
    <scope>IDENTIFICATION BY MASS SPECTROMETRY [LARGE SCALE ANALYSIS]</scope>
</reference>
<reference key="13">
    <citation type="journal article" date="2010" name="Arch. Biochem. Biophys.">
        <title>Casein kinase 1delta activates human recombinant deoxycytidine kinase by Ser-74 phosphorylation, but is not involved in the in vivo regulation of its activity.</title>
        <authorList>
            <person name="Smal C."/>
            <person name="Vertommen D."/>
            <person name="Amsailale R."/>
            <person name="Arts A."/>
            <person name="Degand H."/>
            <person name="Morsomme P."/>
            <person name="Rider M.H."/>
            <person name="Neste E.V."/>
            <person name="Bontemps F."/>
        </authorList>
    </citation>
    <scope>FUNCTION</scope>
    <scope>CATALYTIC ACTIVITY</scope>
    <scope>BIOPHYSICOCHEMICAL PROPERTIES</scope>
    <scope>PHOSPHORYLATION AT SER-11; SER-15; THR-72 AND SER-74 BY CSNK1D/CK1</scope>
    <scope>MUTAGENESIS OF SER-74</scope>
</reference>
<reference key="14">
    <citation type="journal article" date="2010" name="Sci. Signal.">
        <title>Quantitative phosphoproteomics reveals widespread full phosphorylation site occupancy during mitosis.</title>
        <authorList>
            <person name="Olsen J.V."/>
            <person name="Vermeulen M."/>
            <person name="Santamaria A."/>
            <person name="Kumar C."/>
            <person name="Miller M.L."/>
            <person name="Jensen L.J."/>
            <person name="Gnad F."/>
            <person name="Cox J."/>
            <person name="Jensen T.S."/>
            <person name="Nigg E.A."/>
            <person name="Brunak S."/>
            <person name="Mann M."/>
        </authorList>
    </citation>
    <scope>PHOSPHORYLATION [LARGE SCALE ANALYSIS] AT SER-74</scope>
    <scope>IDENTIFICATION BY MASS SPECTROMETRY [LARGE SCALE ANALYSIS]</scope>
    <source>
        <tissue>Cervix carcinoma</tissue>
    </source>
</reference>
<reference key="15">
    <citation type="journal article" date="2011" name="BMC Syst. Biol.">
        <title>Initial characterization of the human central proteome.</title>
        <authorList>
            <person name="Burkard T.R."/>
            <person name="Planyavsky M."/>
            <person name="Kaupe I."/>
            <person name="Breitwieser F.P."/>
            <person name="Buerckstuemmer T."/>
            <person name="Bennett K.L."/>
            <person name="Superti-Furga G."/>
            <person name="Colinge J."/>
        </authorList>
    </citation>
    <scope>IDENTIFICATION BY MASS SPECTROMETRY [LARGE SCALE ANALYSIS]</scope>
</reference>
<reference key="16">
    <citation type="journal article" date="2013" name="J. Proteome Res.">
        <title>Toward a comprehensive characterization of a human cancer cell phosphoproteome.</title>
        <authorList>
            <person name="Zhou H."/>
            <person name="Di Palma S."/>
            <person name="Preisinger C."/>
            <person name="Peng M."/>
            <person name="Polat A.N."/>
            <person name="Heck A.J."/>
            <person name="Mohammed S."/>
        </authorList>
    </citation>
    <scope>PHOSPHORYLATION [LARGE SCALE ANALYSIS] AT SER-74</scope>
    <scope>IDENTIFICATION BY MASS SPECTROMETRY [LARGE SCALE ANALYSIS]</scope>
    <source>
        <tissue>Erythroleukemia</tissue>
    </source>
</reference>
<reference key="17">
    <citation type="journal article" date="2003" name="Nat. Struct. Biol.">
        <title>Structure of human dCK suggests strategies to improve anticancer and antiviral therapy.</title>
        <authorList>
            <person name="Sabini E."/>
            <person name="Ort S."/>
            <person name="Monnerjahn C."/>
            <person name="Konrad M."/>
            <person name="Lavie A."/>
        </authorList>
    </citation>
    <scope>X-RAY CRYSTALLOGRAPHY (1.6 ANGSTROMS) IN COMPLEX WITH ADP; DEOXYCYTIDINE; ARAC AND GEMCITABINE</scope>
    <scope>FUNCTION</scope>
    <scope>CATALYTIC ACTIVITY</scope>
    <scope>SUBUNIT</scope>
    <scope>BIOPHYSICOCHEMICAL PROPERTIES</scope>
    <scope>MUTAGENESIS OF ALA-100; ARG-104 AND ASP-133</scope>
</reference>
<reference key="18">
    <citation type="journal article" date="2006" name="Acta Crystallogr. D">
        <title>The structure of human deoxycytidine kinase in complex with clofarabine reveals key interactions for prodrug activation.</title>
        <authorList>
            <person name="Zhang Y."/>
            <person name="Secrist J.A. III"/>
            <person name="Ealick S.E."/>
        </authorList>
    </citation>
    <scope>X-RAY CRYSTALLOGRAPHY (2.55 ANGSTROMS) IN COMPLEX WITH ADP AND CLOFARABINE</scope>
    <scope>SUBUNIT</scope>
</reference>
<reference key="19">
    <citation type="journal article" date="2007" name="J. Med. Chem.">
        <title>Nonenantioselectivity property of human deoxycytidine kinase explained by structures of the enzyme in complex with L- and D-nucleosides.</title>
        <authorList>
            <person name="Sabini E."/>
            <person name="Hazra S."/>
            <person name="Konrad M."/>
            <person name="Lavie A."/>
        </authorList>
    </citation>
    <scope>X-RAY CRYSTALLOGRAPHY (1.7 ANGSTROMS) IN COMPLEXES WITH ADP; D-DEOXYCYTIDINE; L-DEOXYCYTIDINE AND EMTRICITABINE</scope>
</reference>
<reference key="20">
    <citation type="journal article" date="2008" name="J. Mol. Biol.">
        <title>Structural basis for substrate promiscuity of dCK.</title>
        <authorList>
            <person name="Sabini E."/>
            <person name="Hazra S."/>
            <person name="Ort S."/>
            <person name="Konrad M."/>
            <person name="Lavie A."/>
        </authorList>
    </citation>
    <scope>X-RAY CRYSTALLOGRAPHY (1.77 ANGSTROMS) IN COMPLEXES WITH D-DEOXYADENOSINE; L-DEOXYADENOSINE; ADP AND UDP</scope>
    <scope>CATALYTIC ACTIVITY</scope>
    <scope>FUNCTION</scope>
</reference>
<reference key="21">
    <citation type="journal article" date="2009" name="Biochemistry">
        <title>Extending thymidine kinase activity to the catalytic repertoire of human deoxycytidine kinase.</title>
        <authorList>
            <person name="Hazra S."/>
            <person name="Sabini E."/>
            <person name="Ort S."/>
            <person name="Konrad M."/>
            <person name="Lavie A."/>
        </authorList>
    </citation>
    <scope>X-RAY CRYSTALLOGRAPHY (2.31 ANGSTROMS)</scope>
    <scope>FUNCTION</scope>
    <scope>CATALYTIC ACTIVITY</scope>
    <scope>MUTAGENESIS OF ARG-104 AND ASP-133</scope>
</reference>
<reference key="22">
    <citation type="journal article" date="2009" name="Bioorg. Med. Chem. Lett.">
        <title>Lead optimization and structure-based design of potent and bioavailable deoxycytidine kinase inhibitors.</title>
        <authorList>
            <person name="Jessop T.C."/>
            <person name="Tarver J.E."/>
            <person name="Carlsen M."/>
            <person name="Xu A."/>
            <person name="Healy J.P."/>
            <person name="Heim-Riether A."/>
            <person name="Fu Q."/>
            <person name="Taylor J.A."/>
            <person name="Augeri D.J."/>
            <person name="Shen M."/>
            <person name="Stouch T.R."/>
            <person name="Swanson R.V."/>
            <person name="Tari L.W."/>
            <person name="Hunter M."/>
            <person name="Hoffman I."/>
            <person name="Keyes P.E."/>
            <person name="Yu X.C."/>
            <person name="Miranda M."/>
            <person name="Liu Q."/>
            <person name="Swaffield J.C."/>
            <person name="David Kimball S."/>
            <person name="Nouraldeen A."/>
            <person name="Wilson A.G."/>
            <person name="Foushee A.M."/>
            <person name="Jhaver K."/>
            <person name="Finch R."/>
            <person name="Anderson S."/>
            <person name="Oravecz T."/>
            <person name="Carson K.G."/>
        </authorList>
    </citation>
    <scope>X-RAY CRYSTALLOGRAPHY (2.0 ANGSTROMS) OF 20-260 IN COMPLEX WITH SYNTHETIC INHIBITOR</scope>
</reference>
<reference key="23">
    <citation type="journal article" date="2010" name="Biochemistry">
        <title>Structural and kinetic characterization of human deoxycytidine kinase variants able to phosphorylate 5-substituted deoxycytidine and thymidine analogues.</title>
        <authorList>
            <person name="Hazra S."/>
            <person name="Ort S."/>
            <person name="Konrad M."/>
            <person name="Lavie A."/>
        </authorList>
    </citation>
    <scope>X-RAY CRYSTALLOGRAPHY (1.96 ANGSTROMS) IN COMPLEX WITH ADP AND 5-METHYL-DEOXYCYTIDINE</scope>
    <scope>FUNCTION</scope>
    <scope>CATALYTIC ACTIVITY</scope>
    <scope>MUTAGENESIS OF ARG-104 AND ASP-133</scope>
</reference>
<reference key="24">
    <citation type="journal article" date="2010" name="J. Med. Chem.">
        <title>The sugar ring of the nucleoside is required for productive substrate positioning in the active site of human deoxycytidine kinase (dCK): implications for the development of dCK-activated acyclic guanine analogues.</title>
        <authorList>
            <person name="Hazra S."/>
            <person name="Konrad M."/>
            <person name="Lavie A."/>
        </authorList>
    </citation>
    <scope>X-RAY CRYSTALLOGRAPHY (2.1 ANGSTROMS) IN COMPLEX WITH ACYCLOVIR AND UDP</scope>
</reference>
<name>DCK_HUMAN</name>